<feature type="chain" id="PRO_0000193147" description="Luciferin 4-monooxygenase">
    <location>
        <begin position="1"/>
        <end position="550"/>
    </location>
</feature>
<feature type="short sequence motif" description="Microbody targeting signal">
    <location>
        <begin position="548"/>
        <end position="550"/>
    </location>
</feature>
<feature type="sequence conflict" description="In Ref. 2; CAA59281." evidence="3" ref="2">
    <original>A</original>
    <variation>G</variation>
    <location>
        <position position="361"/>
    </location>
</feature>
<feature type="helix" evidence="6">
    <location>
        <begin position="4"/>
        <end position="6"/>
    </location>
</feature>
<feature type="strand" evidence="6">
    <location>
        <begin position="7"/>
        <end position="9"/>
    </location>
</feature>
<feature type="helix" evidence="6">
    <location>
        <begin position="22"/>
        <end position="34"/>
    </location>
</feature>
<feature type="strand" evidence="6">
    <location>
        <begin position="40"/>
        <end position="44"/>
    </location>
</feature>
<feature type="turn" evidence="6">
    <location>
        <begin position="45"/>
        <end position="47"/>
    </location>
</feature>
<feature type="strand" evidence="6">
    <location>
        <begin position="50"/>
        <end position="52"/>
    </location>
</feature>
<feature type="helix" evidence="6">
    <location>
        <begin position="53"/>
        <end position="70"/>
    </location>
</feature>
<feature type="strand" evidence="6">
    <location>
        <begin position="77"/>
        <end position="81"/>
    </location>
</feature>
<feature type="turn" evidence="6">
    <location>
        <begin position="86"/>
        <end position="88"/>
    </location>
</feature>
<feature type="helix" evidence="6">
    <location>
        <begin position="89"/>
        <end position="97"/>
    </location>
</feature>
<feature type="strand" evidence="6">
    <location>
        <begin position="101"/>
        <end position="104"/>
    </location>
</feature>
<feature type="helix" evidence="6">
    <location>
        <begin position="111"/>
        <end position="121"/>
    </location>
</feature>
<feature type="strand" evidence="6">
    <location>
        <begin position="124"/>
        <end position="128"/>
    </location>
</feature>
<feature type="helix" evidence="6">
    <location>
        <begin position="130"/>
        <end position="132"/>
    </location>
</feature>
<feature type="helix" evidence="6">
    <location>
        <begin position="133"/>
        <end position="142"/>
    </location>
</feature>
<feature type="strand" evidence="6">
    <location>
        <begin position="148"/>
        <end position="151"/>
    </location>
</feature>
<feature type="strand" evidence="5">
    <location>
        <begin position="161"/>
        <end position="163"/>
    </location>
</feature>
<feature type="helix" evidence="6">
    <location>
        <begin position="164"/>
        <end position="171"/>
    </location>
</feature>
<feature type="turn" evidence="6">
    <location>
        <begin position="178"/>
        <end position="180"/>
    </location>
</feature>
<feature type="turn" evidence="6">
    <location>
        <begin position="188"/>
        <end position="190"/>
    </location>
</feature>
<feature type="strand" evidence="6">
    <location>
        <begin position="191"/>
        <end position="197"/>
    </location>
</feature>
<feature type="strand" evidence="8">
    <location>
        <begin position="201"/>
        <end position="204"/>
    </location>
</feature>
<feature type="strand" evidence="6">
    <location>
        <begin position="207"/>
        <end position="211"/>
    </location>
</feature>
<feature type="helix" evidence="6">
    <location>
        <begin position="212"/>
        <end position="222"/>
    </location>
</feature>
<feature type="turn" evidence="6">
    <location>
        <begin position="225"/>
        <end position="227"/>
    </location>
</feature>
<feature type="strand" evidence="6">
    <location>
        <begin position="236"/>
        <end position="239"/>
    </location>
</feature>
<feature type="helix" evidence="6">
    <location>
        <begin position="246"/>
        <end position="258"/>
    </location>
</feature>
<feature type="strand" evidence="6">
    <location>
        <begin position="261"/>
        <end position="264"/>
    </location>
</feature>
<feature type="helix" evidence="6">
    <location>
        <begin position="270"/>
        <end position="279"/>
    </location>
</feature>
<feature type="strand" evidence="6">
    <location>
        <begin position="283"/>
        <end position="287"/>
    </location>
</feature>
<feature type="helix" evidence="6">
    <location>
        <begin position="289"/>
        <end position="297"/>
    </location>
</feature>
<feature type="helix" evidence="6">
    <location>
        <begin position="300"/>
        <end position="303"/>
    </location>
</feature>
<feature type="strand" evidence="6">
    <location>
        <begin position="311"/>
        <end position="314"/>
    </location>
</feature>
<feature type="helix" evidence="6">
    <location>
        <begin position="321"/>
        <end position="330"/>
    </location>
</feature>
<feature type="strand" evidence="6">
    <location>
        <begin position="337"/>
        <end position="341"/>
    </location>
</feature>
<feature type="helix" evidence="6">
    <location>
        <begin position="343"/>
        <end position="345"/>
    </location>
</feature>
<feature type="strand" evidence="6">
    <location>
        <begin position="346"/>
        <end position="351"/>
    </location>
</feature>
<feature type="strand" evidence="6">
    <location>
        <begin position="363"/>
        <end position="365"/>
    </location>
</feature>
<feature type="strand" evidence="6">
    <location>
        <begin position="370"/>
        <end position="374"/>
    </location>
</feature>
<feature type="turn" evidence="6">
    <location>
        <begin position="376"/>
        <end position="378"/>
    </location>
</feature>
<feature type="strand" evidence="6">
    <location>
        <begin position="388"/>
        <end position="394"/>
    </location>
</feature>
<feature type="strand" evidence="6">
    <location>
        <begin position="399"/>
        <end position="401"/>
    </location>
</feature>
<feature type="helix" evidence="6">
    <location>
        <begin position="405"/>
        <end position="411"/>
    </location>
</feature>
<feature type="turn" evidence="9">
    <location>
        <begin position="414"/>
        <end position="416"/>
    </location>
</feature>
<feature type="strand" evidence="6">
    <location>
        <begin position="418"/>
        <end position="426"/>
    </location>
</feature>
<feature type="strand" evidence="6">
    <location>
        <begin position="432"/>
        <end position="434"/>
    </location>
</feature>
<feature type="helix" evidence="8">
    <location>
        <begin position="438"/>
        <end position="440"/>
    </location>
</feature>
<feature type="strand" evidence="5">
    <location>
        <begin position="442"/>
        <end position="444"/>
    </location>
</feature>
<feature type="strand" evidence="5">
    <location>
        <begin position="447"/>
        <end position="449"/>
    </location>
</feature>
<feature type="helix" evidence="5">
    <location>
        <begin position="451"/>
        <end position="459"/>
    </location>
</feature>
<feature type="strand" evidence="5">
    <location>
        <begin position="464"/>
        <end position="474"/>
    </location>
</feature>
<feature type="turn" evidence="5">
    <location>
        <begin position="475"/>
        <end position="477"/>
    </location>
</feature>
<feature type="strand" evidence="5">
    <location>
        <begin position="478"/>
        <end position="487"/>
    </location>
</feature>
<feature type="helix" evidence="5">
    <location>
        <begin position="495"/>
        <end position="505"/>
    </location>
</feature>
<feature type="helix" evidence="5">
    <location>
        <begin position="508"/>
        <end position="510"/>
    </location>
</feature>
<feature type="strand" evidence="5">
    <location>
        <begin position="515"/>
        <end position="521"/>
    </location>
</feature>
<feature type="strand" evidence="4">
    <location>
        <begin position="528"/>
        <end position="530"/>
    </location>
</feature>
<feature type="helix" evidence="5">
    <location>
        <begin position="532"/>
        <end position="542"/>
    </location>
</feature>
<feature type="turn" evidence="7">
    <location>
        <begin position="544"/>
        <end position="546"/>
    </location>
</feature>
<name>LUCI_PHOPY</name>
<accession>P08659</accession>
<accession>Q27755</accession>
<keyword id="KW-0002">3D-structure</keyword>
<keyword id="KW-0067">ATP-binding</keyword>
<keyword id="KW-0455">Luminescence</keyword>
<keyword id="KW-0460">Magnesium</keyword>
<keyword id="KW-0479">Metal-binding</keyword>
<keyword id="KW-0503">Monooxygenase</keyword>
<keyword id="KW-0547">Nucleotide-binding</keyword>
<keyword id="KW-0560">Oxidoreductase</keyword>
<keyword id="KW-0576">Peroxisome</keyword>
<keyword id="KW-0599">Photoprotein</keyword>
<proteinExistence type="evidence at protein level"/>
<protein>
    <recommendedName>
        <fullName>Luciferin 4-monooxygenase</fullName>
        <shortName>Luciferase</shortName>
        <ecNumber evidence="1">1.13.12.7</ecNumber>
    </recommendedName>
</protein>
<organism>
    <name type="scientific">Photinus pyralis</name>
    <name type="common">Common eastern firefly</name>
    <name type="synonym">Lampyris pyralis</name>
    <dbReference type="NCBI Taxonomy" id="7054"/>
    <lineage>
        <taxon>Eukaryota</taxon>
        <taxon>Metazoa</taxon>
        <taxon>Ecdysozoa</taxon>
        <taxon>Arthropoda</taxon>
        <taxon>Hexapoda</taxon>
        <taxon>Insecta</taxon>
        <taxon>Pterygota</taxon>
        <taxon>Neoptera</taxon>
        <taxon>Endopterygota</taxon>
        <taxon>Coleoptera</taxon>
        <taxon>Polyphaga</taxon>
        <taxon>Elateriformia</taxon>
        <taxon>Elateroidea</taxon>
        <taxon>Lampyridae</taxon>
        <taxon>Lampyrinae</taxon>
        <taxon>Photinus</taxon>
    </lineage>
</organism>
<comment type="function">
    <text evidence="1">Produces green light with a wavelength of 562 nm.</text>
</comment>
<comment type="catalytic activity">
    <reaction evidence="1">
        <text>firefly D-luciferin + ATP + O2 = firefly oxyluciferin + hnu + AMP + CO2 + diphosphate</text>
        <dbReference type="Rhea" id="RHEA:10732"/>
        <dbReference type="ChEBI" id="CHEBI:15379"/>
        <dbReference type="ChEBI" id="CHEBI:16526"/>
        <dbReference type="ChEBI" id="CHEBI:16792"/>
        <dbReference type="ChEBI" id="CHEBI:30212"/>
        <dbReference type="ChEBI" id="CHEBI:30616"/>
        <dbReference type="ChEBI" id="CHEBI:33019"/>
        <dbReference type="ChEBI" id="CHEBI:58038"/>
        <dbReference type="ChEBI" id="CHEBI:456215"/>
        <dbReference type="EC" id="1.13.12.7"/>
    </reaction>
</comment>
<comment type="cofactor">
    <cofactor>
        <name>Mg(2+)</name>
        <dbReference type="ChEBI" id="CHEBI:18420"/>
    </cofactor>
</comment>
<comment type="subcellular location">
    <subcellularLocation>
        <location evidence="2">Peroxisome</location>
    </subcellularLocation>
</comment>
<comment type="similarity">
    <text evidence="3">Belongs to the ATP-dependent AMP-binding enzyme family.</text>
</comment>
<comment type="online information" name="Wikipedia">
    <link uri="https://en.wikipedia.org/wiki/Firefly_luciferase"/>
    <text>Firefly luciferase entry</text>
</comment>
<sequence length="550" mass="60745">MEDAKNIKKGPAPFYPLEDGTAGEQLHKAMKRYALVPGTIAFTDAHIEVNITYAEYFEMSVRLAEAMKRYGLNTNHRIVVCSENSLQFFMPVLGALFIGVAVAPANDIYNERELLNSMNISQPTVVFVSKKGLQKILNVQKKLPIIQKIIIMDSKTDYQGFQSMYTFVTSHLPPGFNEYDFVPESFDRDKTIALIMNSSGSTGLPKGVALPHRTACVRFSHARDPIFGNQIIPDTAILSVVPFHHGFGMFTTLGYLICGFRVVLMYRFEEELFLRSLQDYKIQSALLVPTLFSFFAKSTLIDKYDLSNLHEIASGGAPLSKEVGEAVAKRFHLPGIRQGYGLTETTSAILITPEGDDKPGAVGKVVPFFEAKVVDLDTGKTLGVNQRGELCVRGPMIMSGYVNNPEATNALIDKDGWLHSGDIAYWDEDEHFFIVDRLKSLIKYKGYQVAPAELESILLQHPNIFDAGVAGLPDDDAGELPAAVVVLEHGKTMTEKEIVDYVASQVTTAKKLRGGVVFVDEVPKGLTGKLDARKIREILIKAKKGGKSKL</sequence>
<evidence type="ECO:0000250" key="1">
    <source>
        <dbReference type="UniProtKB" id="Q26304"/>
    </source>
</evidence>
<evidence type="ECO:0000269" key="2">
    <source>
    </source>
</evidence>
<evidence type="ECO:0000305" key="3"/>
<evidence type="ECO:0007829" key="4">
    <source>
        <dbReference type="PDB" id="1BA3"/>
    </source>
</evidence>
<evidence type="ECO:0007829" key="5">
    <source>
        <dbReference type="PDB" id="1LCI"/>
    </source>
</evidence>
<evidence type="ECO:0007829" key="6">
    <source>
        <dbReference type="PDB" id="3RIX"/>
    </source>
</evidence>
<evidence type="ECO:0007829" key="7">
    <source>
        <dbReference type="PDB" id="4G36"/>
    </source>
</evidence>
<evidence type="ECO:0007829" key="8">
    <source>
        <dbReference type="PDB" id="5KYT"/>
    </source>
</evidence>
<evidence type="ECO:0007829" key="9">
    <source>
        <dbReference type="PDB" id="5WYS"/>
    </source>
</evidence>
<reference key="1">
    <citation type="journal article" date="1987" name="Mol. Cell. Biol.">
        <title>Firefly luciferase gene: structure and expression in mammalian cells.</title>
        <authorList>
            <person name="de Wet J.R."/>
            <person name="Wood K.V."/>
            <person name="Deluca M."/>
            <person name="Helinski D.R."/>
            <person name="Subramani S."/>
        </authorList>
    </citation>
    <scope>NUCLEOTIDE SEQUENCE [GENOMIC DNA]</scope>
</reference>
<reference key="2">
    <citation type="submission" date="1996-07" db="EMBL/GenBank/DDBJ databases">
        <title>Construction and utilization of an Autographa californica nuclear polyhedrosis virus vector with a unique cloning site: expression of genes amplified by the polymerase chain reaction.</title>
        <authorList>
            <person name="Croizier G.M.J."/>
        </authorList>
    </citation>
    <scope>NUCLEOTIDE SEQUENCE [GENOMIC DNA]</scope>
</reference>
<reference key="3">
    <citation type="journal article" date="1987" name="Proc. Natl. Acad. Sci. U.S.A.">
        <title>Firefly luciferase is targeted to peroxisomes in mammalian cells.</title>
        <authorList>
            <person name="Keller G.-A."/>
            <person name="Gould S."/>
            <person name="de Luca M."/>
            <person name="Subramani S."/>
        </authorList>
    </citation>
    <scope>SUBCELLULAR LOCATION</scope>
</reference>
<reference key="4">
    <citation type="journal article" date="1996" name="Structure">
        <title>Crystal structure of firefly luciferase throws light on a superfamily of adenylate-forming enzymes.</title>
        <authorList>
            <person name="Conti E."/>
            <person name="Franks N.P."/>
            <person name="Brick P."/>
        </authorList>
    </citation>
    <scope>X-RAY CRYSTALLOGRAPHY (2.0 ANGSTROMS)</scope>
</reference>
<reference key="5">
    <citation type="journal article" date="1998" name="Biophys. J.">
        <title>Structural basis for the inhibition of firefly luciferase by a general anesthetic.</title>
        <authorList>
            <person name="Franks N.P."/>
            <person name="Jenkins A."/>
            <person name="Conti E."/>
            <person name="Lieb W.R."/>
            <person name="Brick P."/>
        </authorList>
    </citation>
    <scope>X-RAY CRYSTALLOGRAPHY (2.2 ANGSTROMS)</scope>
</reference>
<dbReference type="EC" id="1.13.12.7" evidence="1"/>
<dbReference type="EMBL" id="M15077">
    <property type="protein sequence ID" value="AAA29795.1"/>
    <property type="molecule type" value="Genomic_DNA"/>
</dbReference>
<dbReference type="EMBL" id="X84846">
    <property type="protein sequence ID" value="CAA59281.1"/>
    <property type="molecule type" value="Genomic_DNA"/>
</dbReference>
<dbReference type="EMBL" id="X84848">
    <property type="protein sequence ID" value="CAA59283.1"/>
    <property type="molecule type" value="Genomic_DNA"/>
</dbReference>
<dbReference type="EMBL" id="U03687">
    <property type="protein sequence ID" value="AAA03561.1"/>
    <property type="molecule type" value="Unassigned_DNA"/>
</dbReference>
<dbReference type="EMBL" id="U89934">
    <property type="protein sequence ID" value="AAB64396.1"/>
    <property type="molecule type" value="Genomic_DNA"/>
</dbReference>
<dbReference type="EMBL" id="U89935">
    <property type="protein sequence ID" value="AAB64399.1"/>
    <property type="molecule type" value="Genomic_DNA"/>
</dbReference>
<dbReference type="PIR" id="A26772">
    <property type="entry name" value="A26772"/>
</dbReference>
<dbReference type="RefSeq" id="XP_031329057.1">
    <property type="nucleotide sequence ID" value="XM_031473197.1"/>
</dbReference>
<dbReference type="PDB" id="1BA3">
    <property type="method" value="X-ray"/>
    <property type="resolution" value="2.20 A"/>
    <property type="chains" value="A=1-550"/>
</dbReference>
<dbReference type="PDB" id="1LCI">
    <property type="method" value="X-ray"/>
    <property type="resolution" value="2.00 A"/>
    <property type="chains" value="A=1-550"/>
</dbReference>
<dbReference type="PDB" id="3IEP">
    <property type="method" value="X-ray"/>
    <property type="resolution" value="2.10 A"/>
    <property type="chains" value="A=1-550"/>
</dbReference>
<dbReference type="PDB" id="3IER">
    <property type="method" value="X-ray"/>
    <property type="resolution" value="2.05 A"/>
    <property type="chains" value="A=1-550"/>
</dbReference>
<dbReference type="PDB" id="3IES">
    <property type="method" value="X-ray"/>
    <property type="resolution" value="2.00 A"/>
    <property type="chains" value="A=1-550"/>
</dbReference>
<dbReference type="PDB" id="3RIX">
    <property type="method" value="X-ray"/>
    <property type="resolution" value="1.70 A"/>
    <property type="chains" value="A=1-550"/>
</dbReference>
<dbReference type="PDB" id="4E5D">
    <property type="method" value="X-ray"/>
    <property type="resolution" value="2.20 A"/>
    <property type="chains" value="A=1-550"/>
</dbReference>
<dbReference type="PDB" id="4G36">
    <property type="method" value="X-ray"/>
    <property type="resolution" value="2.62 A"/>
    <property type="chains" value="A/B=1-550"/>
</dbReference>
<dbReference type="PDB" id="4G37">
    <property type="method" value="X-ray"/>
    <property type="resolution" value="2.40 A"/>
    <property type="chains" value="A/B=1-550"/>
</dbReference>
<dbReference type="PDB" id="5DV9">
    <property type="method" value="X-ray"/>
    <property type="resolution" value="2.40 A"/>
    <property type="chains" value="A=1-550"/>
</dbReference>
<dbReference type="PDB" id="5DWV">
    <property type="method" value="X-ray"/>
    <property type="resolution" value="2.30 A"/>
    <property type="chains" value="A=1-550"/>
</dbReference>
<dbReference type="PDB" id="5GYZ">
    <property type="method" value="X-ray"/>
    <property type="resolution" value="2.40 A"/>
    <property type="chains" value="A=4-438"/>
</dbReference>
<dbReference type="PDB" id="5GZ2">
    <property type="method" value="X-ray"/>
    <property type="resolution" value="2.00 A"/>
    <property type="chains" value="A=3-438"/>
</dbReference>
<dbReference type="PDB" id="5KYT">
    <property type="method" value="X-ray"/>
    <property type="resolution" value="2.00 A"/>
    <property type="chains" value="A/B=1-550"/>
</dbReference>
<dbReference type="PDB" id="5KYV">
    <property type="method" value="X-ray"/>
    <property type="resolution" value="2.50 A"/>
    <property type="chains" value="A/B=1-550"/>
</dbReference>
<dbReference type="PDB" id="5WYS">
    <property type="method" value="X-ray"/>
    <property type="resolution" value="3.00 A"/>
    <property type="chains" value="A=1-550"/>
</dbReference>
<dbReference type="PDB" id="6HPS">
    <property type="method" value="X-ray"/>
    <property type="resolution" value="3.10 A"/>
    <property type="chains" value="A/B=4-546"/>
</dbReference>
<dbReference type="PDB" id="6Q2M">
    <property type="method" value="X-ray"/>
    <property type="resolution" value="2.75 A"/>
    <property type="chains" value="A/B/C=1-550"/>
</dbReference>
<dbReference type="PDBsum" id="1BA3"/>
<dbReference type="PDBsum" id="1LCI"/>
<dbReference type="PDBsum" id="3IEP"/>
<dbReference type="PDBsum" id="3IER"/>
<dbReference type="PDBsum" id="3IES"/>
<dbReference type="PDBsum" id="3RIX"/>
<dbReference type="PDBsum" id="4E5D"/>
<dbReference type="PDBsum" id="4G36"/>
<dbReference type="PDBsum" id="4G37"/>
<dbReference type="PDBsum" id="5DV9"/>
<dbReference type="PDBsum" id="5DWV"/>
<dbReference type="PDBsum" id="5GYZ"/>
<dbReference type="PDBsum" id="5GZ2"/>
<dbReference type="PDBsum" id="5KYT"/>
<dbReference type="PDBsum" id="5KYV"/>
<dbReference type="PDBsum" id="5WYS"/>
<dbReference type="PDBsum" id="6HPS"/>
<dbReference type="PDBsum" id="6Q2M"/>
<dbReference type="BMRB" id="P08659"/>
<dbReference type="SMR" id="P08659"/>
<dbReference type="ELM" id="P08659"/>
<dbReference type="IntAct" id="P08659">
    <property type="interactions" value="1"/>
</dbReference>
<dbReference type="MINT" id="P08659"/>
<dbReference type="BindingDB" id="P08659"/>
<dbReference type="ChEMBL" id="CHEMBL5567"/>
<dbReference type="DrugCentral" id="P08659"/>
<dbReference type="GeneID" id="116160065"/>
<dbReference type="OrthoDB" id="10253869at2759"/>
<dbReference type="BRENDA" id="1.13.12.7">
    <property type="organism ID" value="4775"/>
</dbReference>
<dbReference type="BRENDA" id="6.2.1.3">
    <property type="organism ID" value="4775"/>
</dbReference>
<dbReference type="SABIO-RK" id="P08659"/>
<dbReference type="EvolutionaryTrace" id="P08659"/>
<dbReference type="GO" id="GO:0005777">
    <property type="term" value="C:peroxisome"/>
    <property type="evidence" value="ECO:0000314"/>
    <property type="project" value="UniProtKB"/>
</dbReference>
<dbReference type="GO" id="GO:0005524">
    <property type="term" value="F:ATP binding"/>
    <property type="evidence" value="ECO:0007669"/>
    <property type="project" value="UniProtKB-KW"/>
</dbReference>
<dbReference type="GO" id="GO:0016405">
    <property type="term" value="F:CoA-ligase activity"/>
    <property type="evidence" value="ECO:0007669"/>
    <property type="project" value="TreeGrafter"/>
</dbReference>
<dbReference type="GO" id="GO:0046872">
    <property type="term" value="F:metal ion binding"/>
    <property type="evidence" value="ECO:0007669"/>
    <property type="project" value="UniProtKB-KW"/>
</dbReference>
<dbReference type="GO" id="GO:0047077">
    <property type="term" value="F:Photinus-luciferin 4-monooxygenase (ATP-hydrolyzing) activity"/>
    <property type="evidence" value="ECO:0007669"/>
    <property type="project" value="UniProtKB-EC"/>
</dbReference>
<dbReference type="GO" id="GO:0051087">
    <property type="term" value="F:protein-folding chaperone binding"/>
    <property type="evidence" value="ECO:0000353"/>
    <property type="project" value="CAFA"/>
</dbReference>
<dbReference type="GO" id="GO:0008218">
    <property type="term" value="P:bioluminescence"/>
    <property type="evidence" value="ECO:0007669"/>
    <property type="project" value="UniProtKB-KW"/>
</dbReference>
<dbReference type="CDD" id="cd17642">
    <property type="entry name" value="Firefly_Luc"/>
    <property type="match status" value="1"/>
</dbReference>
<dbReference type="FunFam" id="3.30.300.30:FF:000007">
    <property type="entry name" value="4-coumarate--CoA ligase 2"/>
    <property type="match status" value="1"/>
</dbReference>
<dbReference type="FunFam" id="3.40.50.12780:FF:000003">
    <property type="entry name" value="Long-chain-fatty-acid--CoA ligase FadD"/>
    <property type="match status" value="1"/>
</dbReference>
<dbReference type="FunFam" id="2.30.38.10:FF:000005">
    <property type="entry name" value="Luciferin 4-monooxygenase"/>
    <property type="match status" value="1"/>
</dbReference>
<dbReference type="FunFam" id="3.40.50.980:FF:000020">
    <property type="entry name" value="Luciferin 4-monooxygenase"/>
    <property type="match status" value="1"/>
</dbReference>
<dbReference type="Gene3D" id="3.30.300.30">
    <property type="match status" value="1"/>
</dbReference>
<dbReference type="Gene3D" id="3.40.50.980">
    <property type="match status" value="2"/>
</dbReference>
<dbReference type="Gene3D" id="2.30.38.10">
    <property type="entry name" value="Luciferase, Domain 3"/>
    <property type="match status" value="1"/>
</dbReference>
<dbReference type="InterPro" id="IPR025110">
    <property type="entry name" value="AMP-bd_C"/>
</dbReference>
<dbReference type="InterPro" id="IPR045851">
    <property type="entry name" value="AMP-bd_C_sf"/>
</dbReference>
<dbReference type="InterPro" id="IPR020845">
    <property type="entry name" value="AMP-binding_CS"/>
</dbReference>
<dbReference type="InterPro" id="IPR000873">
    <property type="entry name" value="AMP-dep_synth/lig_dom"/>
</dbReference>
<dbReference type="PANTHER" id="PTHR24096:SF423">
    <property type="entry name" value="GM05240P"/>
    <property type="match status" value="1"/>
</dbReference>
<dbReference type="PANTHER" id="PTHR24096">
    <property type="entry name" value="LONG-CHAIN-FATTY-ACID--COA LIGASE"/>
    <property type="match status" value="1"/>
</dbReference>
<dbReference type="Pfam" id="PF00501">
    <property type="entry name" value="AMP-binding"/>
    <property type="match status" value="1"/>
</dbReference>
<dbReference type="Pfam" id="PF13193">
    <property type="entry name" value="AMP-binding_C"/>
    <property type="match status" value="1"/>
</dbReference>
<dbReference type="SUPFAM" id="SSF56801">
    <property type="entry name" value="Acetyl-CoA synthetase-like"/>
    <property type="match status" value="1"/>
</dbReference>
<dbReference type="PROSITE" id="PS00455">
    <property type="entry name" value="AMP_BINDING"/>
    <property type="match status" value="1"/>
</dbReference>